<sequence>MIIEFNLLVILLVQMPLSFYMLYRLCYLLFCFLECFLNLFKKCGVFKNAKWLN</sequence>
<dbReference type="EMBL" id="X51344">
    <property type="protein sequence ID" value="CAA35735.1"/>
    <property type="molecule type" value="Genomic_DNA"/>
</dbReference>
<dbReference type="RefSeq" id="NP_040347.1">
    <property type="nucleotide sequence ID" value="NC_001365.1"/>
</dbReference>
<dbReference type="SMR" id="P15902"/>
<dbReference type="KEGG" id="vg:1260869"/>
<dbReference type="Proteomes" id="UP000001252">
    <property type="component" value="Segment"/>
</dbReference>
<dbReference type="GO" id="GO:0033644">
    <property type="term" value="C:host cell membrane"/>
    <property type="evidence" value="ECO:0007669"/>
    <property type="project" value="UniProtKB-SubCell"/>
</dbReference>
<dbReference type="GO" id="GO:0016020">
    <property type="term" value="C:membrane"/>
    <property type="evidence" value="ECO:0007669"/>
    <property type="project" value="UniProtKB-KW"/>
</dbReference>
<comment type="subcellular location">
    <subcellularLocation>
        <location evidence="2">Host membrane</location>
        <topology evidence="2">Single-pass membrane protein</topology>
    </subcellularLocation>
</comment>
<comment type="similarity">
    <text evidence="2">Belongs to the plectrovirus ORF11 family.</text>
</comment>
<feature type="chain" id="PRO_0000065785" description="Uncharacterized protein ORF11">
    <location>
        <begin position="1"/>
        <end position="53"/>
    </location>
</feature>
<feature type="transmembrane region" description="Helical" evidence="1">
    <location>
        <begin position="26"/>
        <end position="46"/>
    </location>
</feature>
<accession>P15902</accession>
<organism>
    <name type="scientific">Spiroplasma virus SpV1-R8A2 B</name>
    <name type="common">SpV1</name>
    <name type="synonym">Spiroplasma virus 1</name>
    <dbReference type="NCBI Taxonomy" id="10854"/>
    <lineage>
        <taxon>Viruses</taxon>
        <taxon>Monodnaviria</taxon>
        <taxon>Loebvirae</taxon>
        <taxon>Hofneiviricota</taxon>
        <taxon>Faserviricetes</taxon>
        <taxon>Tubulavirales</taxon>
        <taxon>Plectroviridae</taxon>
        <taxon>Vespertiliovirus</taxon>
        <taxon>Vespertiliovirus R8A2B</taxon>
    </lineage>
</organism>
<evidence type="ECO:0000255" key="1"/>
<evidence type="ECO:0000305" key="2"/>
<proteinExistence type="inferred from homology"/>
<keyword id="KW-1043">Host membrane</keyword>
<keyword id="KW-0472">Membrane</keyword>
<keyword id="KW-1185">Reference proteome</keyword>
<keyword id="KW-0812">Transmembrane</keyword>
<keyword id="KW-1133">Transmembrane helix</keyword>
<reference key="1">
    <citation type="journal article" date="1990" name="Nucleic Acids Res.">
        <title>Complete nucleotide sequence of the genome of Spiroplasma citri virus SpV1-R8A2 B.</title>
        <authorList>
            <person name="Renaudin J."/>
            <person name="Aullo P."/>
            <person name="Vignault J.C."/>
            <person name="Bove J.M."/>
        </authorList>
    </citation>
    <scope>NUCLEOTIDE SEQUENCE [GENOMIC DNA]</scope>
</reference>
<organismHost>
    <name type="scientific">Spiroplasma citri</name>
    <dbReference type="NCBI Taxonomy" id="2133"/>
</organismHost>
<name>ORF11_SPV1R</name>
<protein>
    <recommendedName>
        <fullName>Uncharacterized protein ORF11</fullName>
    </recommendedName>
    <alternativeName>
        <fullName>Gene 11 protein</fullName>
    </alternativeName>
</protein>
<gene>
    <name type="ORF">ORF11</name>
</gene>